<evidence type="ECO:0000255" key="1">
    <source>
        <dbReference type="HAMAP-Rule" id="MF_01595"/>
    </source>
</evidence>
<dbReference type="EC" id="2.7.7.8" evidence="1"/>
<dbReference type="EMBL" id="CP001083">
    <property type="protein sequence ID" value="ACQ54868.1"/>
    <property type="molecule type" value="Genomic_DNA"/>
</dbReference>
<dbReference type="RefSeq" id="WP_003362553.1">
    <property type="nucleotide sequence ID" value="NC_012658.1"/>
</dbReference>
<dbReference type="SMR" id="C3L0B0"/>
<dbReference type="KEGG" id="cbi:CLJ_B2637"/>
<dbReference type="HOGENOM" id="CLU_004217_2_2_9"/>
<dbReference type="Proteomes" id="UP000002333">
    <property type="component" value="Chromosome"/>
</dbReference>
<dbReference type="GO" id="GO:0005829">
    <property type="term" value="C:cytosol"/>
    <property type="evidence" value="ECO:0007669"/>
    <property type="project" value="TreeGrafter"/>
</dbReference>
<dbReference type="GO" id="GO:0000175">
    <property type="term" value="F:3'-5'-RNA exonuclease activity"/>
    <property type="evidence" value="ECO:0007669"/>
    <property type="project" value="TreeGrafter"/>
</dbReference>
<dbReference type="GO" id="GO:0000287">
    <property type="term" value="F:magnesium ion binding"/>
    <property type="evidence" value="ECO:0007669"/>
    <property type="project" value="UniProtKB-UniRule"/>
</dbReference>
<dbReference type="GO" id="GO:0004654">
    <property type="term" value="F:polyribonucleotide nucleotidyltransferase activity"/>
    <property type="evidence" value="ECO:0007669"/>
    <property type="project" value="UniProtKB-UniRule"/>
</dbReference>
<dbReference type="GO" id="GO:0003723">
    <property type="term" value="F:RNA binding"/>
    <property type="evidence" value="ECO:0007669"/>
    <property type="project" value="UniProtKB-UniRule"/>
</dbReference>
<dbReference type="GO" id="GO:0006402">
    <property type="term" value="P:mRNA catabolic process"/>
    <property type="evidence" value="ECO:0007669"/>
    <property type="project" value="UniProtKB-UniRule"/>
</dbReference>
<dbReference type="GO" id="GO:0006396">
    <property type="term" value="P:RNA processing"/>
    <property type="evidence" value="ECO:0007669"/>
    <property type="project" value="InterPro"/>
</dbReference>
<dbReference type="CDD" id="cd02393">
    <property type="entry name" value="KH-I_PNPase"/>
    <property type="match status" value="1"/>
</dbReference>
<dbReference type="CDD" id="cd11363">
    <property type="entry name" value="RNase_PH_PNPase_1"/>
    <property type="match status" value="1"/>
</dbReference>
<dbReference type="CDD" id="cd11364">
    <property type="entry name" value="RNase_PH_PNPase_2"/>
    <property type="match status" value="1"/>
</dbReference>
<dbReference type="CDD" id="cd04472">
    <property type="entry name" value="S1_PNPase"/>
    <property type="match status" value="1"/>
</dbReference>
<dbReference type="FunFam" id="2.40.50.140:FF:000023">
    <property type="entry name" value="Polyribonucleotide nucleotidyltransferase"/>
    <property type="match status" value="1"/>
</dbReference>
<dbReference type="FunFam" id="3.30.1370.10:FF:000001">
    <property type="entry name" value="Polyribonucleotide nucleotidyltransferase"/>
    <property type="match status" value="1"/>
</dbReference>
<dbReference type="FunFam" id="3.30.230.70:FF:000001">
    <property type="entry name" value="Polyribonucleotide nucleotidyltransferase"/>
    <property type="match status" value="1"/>
</dbReference>
<dbReference type="FunFam" id="3.30.230.70:FF:000037">
    <property type="entry name" value="Polyribonucleotide nucleotidyltransferase"/>
    <property type="match status" value="1"/>
</dbReference>
<dbReference type="Gene3D" id="3.30.230.70">
    <property type="entry name" value="GHMP Kinase, N-terminal domain"/>
    <property type="match status" value="2"/>
</dbReference>
<dbReference type="Gene3D" id="3.30.1370.10">
    <property type="entry name" value="K Homology domain, type 1"/>
    <property type="match status" value="1"/>
</dbReference>
<dbReference type="Gene3D" id="2.40.50.140">
    <property type="entry name" value="Nucleic acid-binding proteins"/>
    <property type="match status" value="1"/>
</dbReference>
<dbReference type="HAMAP" id="MF_01595">
    <property type="entry name" value="PNPase"/>
    <property type="match status" value="1"/>
</dbReference>
<dbReference type="InterPro" id="IPR001247">
    <property type="entry name" value="ExoRNase_PH_dom1"/>
</dbReference>
<dbReference type="InterPro" id="IPR015847">
    <property type="entry name" value="ExoRNase_PH_dom2"/>
</dbReference>
<dbReference type="InterPro" id="IPR036345">
    <property type="entry name" value="ExoRNase_PH_dom2_sf"/>
</dbReference>
<dbReference type="InterPro" id="IPR004087">
    <property type="entry name" value="KH_dom"/>
</dbReference>
<dbReference type="InterPro" id="IPR004088">
    <property type="entry name" value="KH_dom_type_1"/>
</dbReference>
<dbReference type="InterPro" id="IPR036612">
    <property type="entry name" value="KH_dom_type_1_sf"/>
</dbReference>
<dbReference type="InterPro" id="IPR012340">
    <property type="entry name" value="NA-bd_OB-fold"/>
</dbReference>
<dbReference type="InterPro" id="IPR012162">
    <property type="entry name" value="PNPase"/>
</dbReference>
<dbReference type="InterPro" id="IPR027408">
    <property type="entry name" value="PNPase/RNase_PH_dom_sf"/>
</dbReference>
<dbReference type="InterPro" id="IPR015848">
    <property type="entry name" value="PNPase_PH_RNA-bd_bac/org-type"/>
</dbReference>
<dbReference type="InterPro" id="IPR036456">
    <property type="entry name" value="PNPase_PH_RNA-bd_sf"/>
</dbReference>
<dbReference type="InterPro" id="IPR020568">
    <property type="entry name" value="Ribosomal_Su5_D2-typ_SF"/>
</dbReference>
<dbReference type="InterPro" id="IPR003029">
    <property type="entry name" value="S1_domain"/>
</dbReference>
<dbReference type="NCBIfam" id="TIGR03591">
    <property type="entry name" value="polynuc_phos"/>
    <property type="match status" value="1"/>
</dbReference>
<dbReference type="NCBIfam" id="NF008805">
    <property type="entry name" value="PRK11824.1"/>
    <property type="match status" value="1"/>
</dbReference>
<dbReference type="PANTHER" id="PTHR11252">
    <property type="entry name" value="POLYRIBONUCLEOTIDE NUCLEOTIDYLTRANSFERASE"/>
    <property type="match status" value="1"/>
</dbReference>
<dbReference type="PANTHER" id="PTHR11252:SF0">
    <property type="entry name" value="POLYRIBONUCLEOTIDE NUCLEOTIDYLTRANSFERASE 1, MITOCHONDRIAL"/>
    <property type="match status" value="1"/>
</dbReference>
<dbReference type="Pfam" id="PF00013">
    <property type="entry name" value="KH_1"/>
    <property type="match status" value="1"/>
</dbReference>
<dbReference type="Pfam" id="PF03726">
    <property type="entry name" value="PNPase"/>
    <property type="match status" value="1"/>
</dbReference>
<dbReference type="Pfam" id="PF01138">
    <property type="entry name" value="RNase_PH"/>
    <property type="match status" value="2"/>
</dbReference>
<dbReference type="Pfam" id="PF03725">
    <property type="entry name" value="RNase_PH_C"/>
    <property type="match status" value="1"/>
</dbReference>
<dbReference type="Pfam" id="PF00575">
    <property type="entry name" value="S1"/>
    <property type="match status" value="1"/>
</dbReference>
<dbReference type="PIRSF" id="PIRSF005499">
    <property type="entry name" value="PNPase"/>
    <property type="match status" value="1"/>
</dbReference>
<dbReference type="SMART" id="SM00322">
    <property type="entry name" value="KH"/>
    <property type="match status" value="1"/>
</dbReference>
<dbReference type="SMART" id="SM00316">
    <property type="entry name" value="S1"/>
    <property type="match status" value="1"/>
</dbReference>
<dbReference type="SUPFAM" id="SSF54791">
    <property type="entry name" value="Eukaryotic type KH-domain (KH-domain type I)"/>
    <property type="match status" value="1"/>
</dbReference>
<dbReference type="SUPFAM" id="SSF50249">
    <property type="entry name" value="Nucleic acid-binding proteins"/>
    <property type="match status" value="1"/>
</dbReference>
<dbReference type="SUPFAM" id="SSF46915">
    <property type="entry name" value="Polynucleotide phosphorylase/guanosine pentaphosphate synthase (PNPase/GPSI), domain 3"/>
    <property type="match status" value="1"/>
</dbReference>
<dbReference type="SUPFAM" id="SSF55666">
    <property type="entry name" value="Ribonuclease PH domain 2-like"/>
    <property type="match status" value="2"/>
</dbReference>
<dbReference type="SUPFAM" id="SSF54211">
    <property type="entry name" value="Ribosomal protein S5 domain 2-like"/>
    <property type="match status" value="2"/>
</dbReference>
<dbReference type="PROSITE" id="PS50084">
    <property type="entry name" value="KH_TYPE_1"/>
    <property type="match status" value="1"/>
</dbReference>
<dbReference type="PROSITE" id="PS50126">
    <property type="entry name" value="S1"/>
    <property type="match status" value="1"/>
</dbReference>
<protein>
    <recommendedName>
        <fullName evidence="1">Polyribonucleotide nucleotidyltransferase</fullName>
        <ecNumber evidence="1">2.7.7.8</ecNumber>
    </recommendedName>
    <alternativeName>
        <fullName evidence="1">Polynucleotide phosphorylase</fullName>
        <shortName evidence="1">PNPase</shortName>
    </alternativeName>
</protein>
<reference key="1">
    <citation type="submission" date="2008-05" db="EMBL/GenBank/DDBJ databases">
        <title>Genome sequence of Clostridium botulinum Ba4 strain 657.</title>
        <authorList>
            <person name="Shrivastava S."/>
            <person name="Brown J.L."/>
            <person name="Bruce D."/>
            <person name="Detter C."/>
            <person name="Munk C."/>
            <person name="Smith L.A."/>
            <person name="Smith T.J."/>
            <person name="Sutton G."/>
            <person name="Brettin T.S."/>
        </authorList>
    </citation>
    <scope>NUCLEOTIDE SEQUENCE [LARGE SCALE GENOMIC DNA]</scope>
    <source>
        <strain>657 / Type Ba4</strain>
    </source>
</reference>
<accession>C3L0B0</accession>
<sequence>MIHTLETTVAGRKMKVDFGKTGMLSNAAIFMSYGDTVVMINANASKEPREGIDFFPLSVEYEERLYSVGKIPGGFIKREGKPSDKSILHARSIDRPLRPLFPKGYRNDVQIVNTVLSVEQDNLPEILAINGSSLALCLSSIPFTTPVAAVSVGLVDGEFIINPTVAQRENTILDLTVCATKERVMMVEAGGQEIDEETMYSAIMFGFEECKNIVAFQEEAVAKFGKTKNEPVLYKADEEVEKEVKSFAFDMIKEAMYIMDKDERNAQLDKVKEKISEEFSEKYEDKGADISEVIYKTQKEIVRNMLLNEDRRPDGRAFNEVRPISCEVGILPRTHGTGLFTRGLTQVMTVATLGALGDVQILDGIAEEESKRYMHHYNFPSYSVGEVRPLRGPGRREIGHGALAERALEPLIPSEEEFPYTIRLVSEVLSSNGSTSQASVCGSTLALLDAGVPIKRPAAGIAMGLITSEDLEKEKVITDIQGIEDFFGDMDFKVAGTEKGITSIQFDTKIAGLSNSCVKDALEGAKKARLHILGKIKECIPEPRKELSKYAPRTEIICIDPEKIRDVIGAGGKVINKIIADTNVKIEIKEDGKIFVTSNNEPEGVKKAISIIEGLTKEVVQGEIYLGKVTKTTNFGAFVEILPGKEGLVHISKLDFARVEKVEDVVSVGDEILVKVTDIDNQGRINLSRKDAIAKKEEEKDK</sequence>
<organism>
    <name type="scientific">Clostridium botulinum (strain 657 / Type Ba4)</name>
    <dbReference type="NCBI Taxonomy" id="515621"/>
    <lineage>
        <taxon>Bacteria</taxon>
        <taxon>Bacillati</taxon>
        <taxon>Bacillota</taxon>
        <taxon>Clostridia</taxon>
        <taxon>Eubacteriales</taxon>
        <taxon>Clostridiaceae</taxon>
        <taxon>Clostridium</taxon>
    </lineage>
</organism>
<gene>
    <name evidence="1" type="primary">pnp</name>
    <name type="ordered locus">CLJ_B2637</name>
</gene>
<feature type="chain" id="PRO_1000215656" description="Polyribonucleotide nucleotidyltransferase">
    <location>
        <begin position="1"/>
        <end position="702"/>
    </location>
</feature>
<feature type="domain" description="KH" evidence="1">
    <location>
        <begin position="552"/>
        <end position="612"/>
    </location>
</feature>
<feature type="domain" description="S1 motif" evidence="1">
    <location>
        <begin position="622"/>
        <end position="690"/>
    </location>
</feature>
<feature type="binding site" evidence="1">
    <location>
        <position position="485"/>
    </location>
    <ligand>
        <name>Mg(2+)</name>
        <dbReference type="ChEBI" id="CHEBI:18420"/>
    </ligand>
</feature>
<feature type="binding site" evidence="1">
    <location>
        <position position="491"/>
    </location>
    <ligand>
        <name>Mg(2+)</name>
        <dbReference type="ChEBI" id="CHEBI:18420"/>
    </ligand>
</feature>
<keyword id="KW-0963">Cytoplasm</keyword>
<keyword id="KW-0460">Magnesium</keyword>
<keyword id="KW-0479">Metal-binding</keyword>
<keyword id="KW-0548">Nucleotidyltransferase</keyword>
<keyword id="KW-0694">RNA-binding</keyword>
<keyword id="KW-0808">Transferase</keyword>
<proteinExistence type="inferred from homology"/>
<name>PNP_CLOB6</name>
<comment type="function">
    <text evidence="1">Involved in mRNA degradation. Catalyzes the phosphorolysis of single-stranded polyribonucleotides processively in the 3'- to 5'-direction.</text>
</comment>
<comment type="catalytic activity">
    <reaction evidence="1">
        <text>RNA(n+1) + phosphate = RNA(n) + a ribonucleoside 5'-diphosphate</text>
        <dbReference type="Rhea" id="RHEA:22096"/>
        <dbReference type="Rhea" id="RHEA-COMP:14527"/>
        <dbReference type="Rhea" id="RHEA-COMP:17342"/>
        <dbReference type="ChEBI" id="CHEBI:43474"/>
        <dbReference type="ChEBI" id="CHEBI:57930"/>
        <dbReference type="ChEBI" id="CHEBI:140395"/>
        <dbReference type="EC" id="2.7.7.8"/>
    </reaction>
</comment>
<comment type="cofactor">
    <cofactor evidence="1">
        <name>Mg(2+)</name>
        <dbReference type="ChEBI" id="CHEBI:18420"/>
    </cofactor>
</comment>
<comment type="subcellular location">
    <subcellularLocation>
        <location evidence="1">Cytoplasm</location>
    </subcellularLocation>
</comment>
<comment type="similarity">
    <text evidence="1">Belongs to the polyribonucleotide nucleotidyltransferase family.</text>
</comment>